<sequence>MRPEFSAELSELDSTLTTIEKVLNPQEMSDRVRELEAQAADPSLWDDPDHAQQVTSELSHVQAELRKITDLRQRIEDLPIMVELAEEEDGDTSIAEEELADLRSLIDALEVKTMLSGEYDAREAVINIRSGAGGVDAADWAEMLMRMYTRWAEKNGHKVDIYDISYAEEAGIKSATFVVHGDYMYGQLSVEQGAHRLVRISPFDNQGRRQTSFAEVEVLPVVEKVDSIDIPDADVRVDVYRSSGPGGQSVNTTDSAVRLTHIPTGIVVTCQNEKSQIQNKASAMRVLQAKLLERKRQEERAEMDALGAGGNASWGNQMRSYVLHPYQMVKDLRTNFEVNDPQKVLDGDIDGLLEAGIRWRMAESQSAE</sequence>
<protein>
    <recommendedName>
        <fullName evidence="1">Peptide chain release factor 2</fullName>
        <shortName evidence="1">RF-2</shortName>
    </recommendedName>
</protein>
<feature type="chain" id="PRO_0000166815" description="Peptide chain release factor 2">
    <location>
        <begin position="1"/>
        <end position="368"/>
    </location>
</feature>
<feature type="modified residue" description="N5-methylglutamine" evidence="1">
    <location>
        <position position="248"/>
    </location>
</feature>
<accession>Q8NS78</accession>
<dbReference type="EMBL" id="BA000036">
    <property type="protein sequence ID" value="BAB98194.1"/>
    <property type="molecule type" value="Genomic_DNA"/>
</dbReference>
<dbReference type="EMBL" id="BX927150">
    <property type="protein sequence ID" value="CAF19507.1"/>
    <property type="molecule type" value="Genomic_DNA"/>
</dbReference>
<dbReference type="RefSeq" id="NP_600030.1">
    <property type="nucleotide sequence ID" value="NC_003450.3"/>
</dbReference>
<dbReference type="RefSeq" id="WP_003863507.1">
    <property type="nucleotide sequence ID" value="NC_006958.1"/>
</dbReference>
<dbReference type="SMR" id="Q8NS78"/>
<dbReference type="STRING" id="196627.cg0913"/>
<dbReference type="GeneID" id="1018796"/>
<dbReference type="KEGG" id="cgb:cg0913"/>
<dbReference type="KEGG" id="cgl:Cgl0801"/>
<dbReference type="PATRIC" id="fig|196627.13.peg.783"/>
<dbReference type="eggNOG" id="COG1186">
    <property type="taxonomic scope" value="Bacteria"/>
</dbReference>
<dbReference type="HOGENOM" id="CLU_036856_6_0_11"/>
<dbReference type="OrthoDB" id="9806673at2"/>
<dbReference type="BioCyc" id="CORYNE:G18NG-10364-MONOMER"/>
<dbReference type="Proteomes" id="UP000000582">
    <property type="component" value="Chromosome"/>
</dbReference>
<dbReference type="Proteomes" id="UP000001009">
    <property type="component" value="Chromosome"/>
</dbReference>
<dbReference type="GO" id="GO:0005737">
    <property type="term" value="C:cytoplasm"/>
    <property type="evidence" value="ECO:0007669"/>
    <property type="project" value="UniProtKB-SubCell"/>
</dbReference>
<dbReference type="GO" id="GO:0016149">
    <property type="term" value="F:translation release factor activity, codon specific"/>
    <property type="evidence" value="ECO:0007669"/>
    <property type="project" value="UniProtKB-UniRule"/>
</dbReference>
<dbReference type="FunFam" id="3.30.160.20:FF:000010">
    <property type="entry name" value="Peptide chain release factor 2"/>
    <property type="match status" value="1"/>
</dbReference>
<dbReference type="Gene3D" id="3.30.160.20">
    <property type="match status" value="1"/>
</dbReference>
<dbReference type="Gene3D" id="3.30.70.1660">
    <property type="match status" value="1"/>
</dbReference>
<dbReference type="Gene3D" id="1.20.58.410">
    <property type="entry name" value="Release factor"/>
    <property type="match status" value="1"/>
</dbReference>
<dbReference type="HAMAP" id="MF_00094">
    <property type="entry name" value="Rel_fac_2"/>
    <property type="match status" value="1"/>
</dbReference>
<dbReference type="InterPro" id="IPR005139">
    <property type="entry name" value="PCRF"/>
</dbReference>
<dbReference type="InterPro" id="IPR000352">
    <property type="entry name" value="Pep_chain_release_fac_I"/>
</dbReference>
<dbReference type="InterPro" id="IPR045853">
    <property type="entry name" value="Pep_chain_release_fac_I_sf"/>
</dbReference>
<dbReference type="InterPro" id="IPR004374">
    <property type="entry name" value="PrfB"/>
</dbReference>
<dbReference type="NCBIfam" id="TIGR00020">
    <property type="entry name" value="prfB"/>
    <property type="match status" value="1"/>
</dbReference>
<dbReference type="PANTHER" id="PTHR43116:SF3">
    <property type="entry name" value="CLASS I PEPTIDE CHAIN RELEASE FACTOR"/>
    <property type="match status" value="1"/>
</dbReference>
<dbReference type="PANTHER" id="PTHR43116">
    <property type="entry name" value="PEPTIDE CHAIN RELEASE FACTOR 2"/>
    <property type="match status" value="1"/>
</dbReference>
<dbReference type="Pfam" id="PF03462">
    <property type="entry name" value="PCRF"/>
    <property type="match status" value="1"/>
</dbReference>
<dbReference type="Pfam" id="PF00472">
    <property type="entry name" value="RF-1"/>
    <property type="match status" value="1"/>
</dbReference>
<dbReference type="SMART" id="SM00937">
    <property type="entry name" value="PCRF"/>
    <property type="match status" value="1"/>
</dbReference>
<dbReference type="SUPFAM" id="SSF75620">
    <property type="entry name" value="Release factor"/>
    <property type="match status" value="1"/>
</dbReference>
<dbReference type="PROSITE" id="PS00745">
    <property type="entry name" value="RF_PROK_I"/>
    <property type="match status" value="1"/>
</dbReference>
<organism>
    <name type="scientific">Corynebacterium glutamicum (strain ATCC 13032 / DSM 20300 / JCM 1318 / BCRC 11384 / CCUG 27702 / LMG 3730 / NBRC 12168 / NCIMB 10025 / NRRL B-2784 / 534)</name>
    <dbReference type="NCBI Taxonomy" id="196627"/>
    <lineage>
        <taxon>Bacteria</taxon>
        <taxon>Bacillati</taxon>
        <taxon>Actinomycetota</taxon>
        <taxon>Actinomycetes</taxon>
        <taxon>Mycobacteriales</taxon>
        <taxon>Corynebacteriaceae</taxon>
        <taxon>Corynebacterium</taxon>
    </lineage>
</organism>
<evidence type="ECO:0000255" key="1">
    <source>
        <dbReference type="HAMAP-Rule" id="MF_00094"/>
    </source>
</evidence>
<gene>
    <name evidence="1" type="primary">prfB</name>
    <name type="ordered locus">Cgl0801</name>
    <name type="ordered locus">cg0913</name>
</gene>
<proteinExistence type="inferred from homology"/>
<comment type="function">
    <text evidence="1">Peptide chain release factor 2 directs the termination of translation in response to the peptide chain termination codons UGA and UAA.</text>
</comment>
<comment type="subcellular location">
    <subcellularLocation>
        <location evidence="1">Cytoplasm</location>
    </subcellularLocation>
</comment>
<comment type="PTM">
    <text evidence="1">Methylated by PrmC. Methylation increases the termination efficiency of RF2.</text>
</comment>
<comment type="similarity">
    <text evidence="1">Belongs to the prokaryotic/mitochondrial release factor family.</text>
</comment>
<name>RF2_CORGL</name>
<keyword id="KW-0963">Cytoplasm</keyword>
<keyword id="KW-0488">Methylation</keyword>
<keyword id="KW-0648">Protein biosynthesis</keyword>
<keyword id="KW-1185">Reference proteome</keyword>
<reference key="1">
    <citation type="journal article" date="2003" name="Appl. Microbiol. Biotechnol.">
        <title>The Corynebacterium glutamicum genome: features and impacts on biotechnological processes.</title>
        <authorList>
            <person name="Ikeda M."/>
            <person name="Nakagawa S."/>
        </authorList>
    </citation>
    <scope>NUCLEOTIDE SEQUENCE [LARGE SCALE GENOMIC DNA]</scope>
    <source>
        <strain>ATCC 13032 / DSM 20300 / JCM 1318 / BCRC 11384 / CCUG 27702 / LMG 3730 / NBRC 12168 / NCIMB 10025 / NRRL B-2784 / 534</strain>
    </source>
</reference>
<reference key="2">
    <citation type="journal article" date="2003" name="J. Biotechnol.">
        <title>The complete Corynebacterium glutamicum ATCC 13032 genome sequence and its impact on the production of L-aspartate-derived amino acids and vitamins.</title>
        <authorList>
            <person name="Kalinowski J."/>
            <person name="Bathe B."/>
            <person name="Bartels D."/>
            <person name="Bischoff N."/>
            <person name="Bott M."/>
            <person name="Burkovski A."/>
            <person name="Dusch N."/>
            <person name="Eggeling L."/>
            <person name="Eikmanns B.J."/>
            <person name="Gaigalat L."/>
            <person name="Goesmann A."/>
            <person name="Hartmann M."/>
            <person name="Huthmacher K."/>
            <person name="Kraemer R."/>
            <person name="Linke B."/>
            <person name="McHardy A.C."/>
            <person name="Meyer F."/>
            <person name="Moeckel B."/>
            <person name="Pfefferle W."/>
            <person name="Puehler A."/>
            <person name="Rey D.A."/>
            <person name="Rueckert C."/>
            <person name="Rupp O."/>
            <person name="Sahm H."/>
            <person name="Wendisch V.F."/>
            <person name="Wiegraebe I."/>
            <person name="Tauch A."/>
        </authorList>
    </citation>
    <scope>NUCLEOTIDE SEQUENCE [LARGE SCALE GENOMIC DNA]</scope>
    <source>
        <strain>ATCC 13032 / DSM 20300 / JCM 1318 / BCRC 11384 / CCUG 27702 / LMG 3730 / NBRC 12168 / NCIMB 10025 / NRRL B-2784 / 534</strain>
    </source>
</reference>